<accession>P19632</accession>
<accession>P20940</accession>
<accession>Q28160</accession>
<sequence length="245" mass="28231">MEKAKSQSLEEDFEGQASHTGPKGVINDWRKFKLESEDSDSVAHSKKEILRQMSSPQSRDDKDSKERFSRKMSVQEYELIHKDKEDENCLRKYRRQCMQDMHQKLSFGPRYGFVYELESGEQFLETIEKEQKITTIVVHIYEDGIKGCDALNSSLICLAAEYPMVKFCKIKASNTGAGDRFSSDVLPTLLVYKGGELLSNFISVTEQLAEEFFTGDVESFLNEYGLLPEKEMHVLEQTNMEEDME</sequence>
<dbReference type="EMBL" id="M58170">
    <property type="protein sequence ID" value="AAA62716.1"/>
    <property type="status" value="ALT_FRAME"/>
    <property type="molecule type" value="mRNA"/>
</dbReference>
<dbReference type="EMBL" id="M33529">
    <property type="protein sequence ID" value="AAA30349.1"/>
    <property type="molecule type" value="mRNA"/>
</dbReference>
<dbReference type="PIR" id="A38379">
    <property type="entry name" value="A38379"/>
</dbReference>
<dbReference type="PDB" id="1A0R">
    <property type="method" value="X-ray"/>
    <property type="resolution" value="2.80 A"/>
    <property type="chains" value="P=1-245"/>
</dbReference>
<dbReference type="PDBsum" id="1A0R"/>
<dbReference type="SMR" id="P19632"/>
<dbReference type="CORUM" id="P19632"/>
<dbReference type="FunCoup" id="P19632">
    <property type="interactions" value="66"/>
</dbReference>
<dbReference type="IntAct" id="P19632">
    <property type="interactions" value="2"/>
</dbReference>
<dbReference type="MINT" id="P19632"/>
<dbReference type="STRING" id="9913.ENSBTAP00000005468"/>
<dbReference type="iPTMnet" id="P19632"/>
<dbReference type="PaxDb" id="9913-ENSBTAP00000005468"/>
<dbReference type="eggNOG" id="KOG3171">
    <property type="taxonomic scope" value="Eukaryota"/>
</dbReference>
<dbReference type="InParanoid" id="P19632"/>
<dbReference type="OrthoDB" id="70588at2759"/>
<dbReference type="EvolutionaryTrace" id="P19632"/>
<dbReference type="Proteomes" id="UP000009136">
    <property type="component" value="Unplaced"/>
</dbReference>
<dbReference type="GO" id="GO:0005829">
    <property type="term" value="C:cytosol"/>
    <property type="evidence" value="ECO:0007669"/>
    <property type="project" value="UniProtKB-SubCell"/>
</dbReference>
<dbReference type="GO" id="GO:0005634">
    <property type="term" value="C:nucleus"/>
    <property type="evidence" value="ECO:0007669"/>
    <property type="project" value="UniProtKB-SubCell"/>
</dbReference>
<dbReference type="GO" id="GO:0001917">
    <property type="term" value="C:photoreceptor inner segment"/>
    <property type="evidence" value="ECO:0007669"/>
    <property type="project" value="UniProtKB-SubCell"/>
</dbReference>
<dbReference type="GO" id="GO:0001750">
    <property type="term" value="C:photoreceptor outer segment"/>
    <property type="evidence" value="ECO:0000318"/>
    <property type="project" value="GO_Central"/>
</dbReference>
<dbReference type="GO" id="GO:0008277">
    <property type="term" value="P:regulation of G protein-coupled receptor signaling pathway"/>
    <property type="evidence" value="ECO:0007669"/>
    <property type="project" value="InterPro"/>
</dbReference>
<dbReference type="GO" id="GO:0007601">
    <property type="term" value="P:visual perception"/>
    <property type="evidence" value="ECO:0007669"/>
    <property type="project" value="UniProtKB-KW"/>
</dbReference>
<dbReference type="CDD" id="cd02987">
    <property type="entry name" value="Phd_like_Phd"/>
    <property type="match status" value="1"/>
</dbReference>
<dbReference type="FunFam" id="3.40.30.10:FF:000072">
    <property type="entry name" value="Phosducin like"/>
    <property type="match status" value="1"/>
</dbReference>
<dbReference type="FunFam" id="1.10.168.10:FF:000002">
    <property type="entry name" value="Phosducin, isoform CRA_a"/>
    <property type="match status" value="1"/>
</dbReference>
<dbReference type="Gene3D" id="3.40.30.10">
    <property type="entry name" value="Glutaredoxin"/>
    <property type="match status" value="1"/>
</dbReference>
<dbReference type="Gene3D" id="1.10.168.10">
    <property type="entry name" value="Phosducin, domain 2"/>
    <property type="match status" value="2"/>
</dbReference>
<dbReference type="InterPro" id="IPR001200">
    <property type="entry name" value="Phosducin"/>
</dbReference>
<dbReference type="InterPro" id="IPR051499">
    <property type="entry name" value="Phosducin-like_reg"/>
</dbReference>
<dbReference type="InterPro" id="IPR023196">
    <property type="entry name" value="Phosducin_N_dom_sf"/>
</dbReference>
<dbReference type="InterPro" id="IPR024253">
    <property type="entry name" value="Phosducin_thioredoxin-like_dom"/>
</dbReference>
<dbReference type="InterPro" id="IPR036249">
    <property type="entry name" value="Thioredoxin-like_sf"/>
</dbReference>
<dbReference type="PANTHER" id="PTHR46052:SF3">
    <property type="entry name" value="PHOSDUCIN"/>
    <property type="match status" value="1"/>
</dbReference>
<dbReference type="PANTHER" id="PTHR46052">
    <property type="entry name" value="PHOSDUCIN-LIKE PROTEIN"/>
    <property type="match status" value="1"/>
</dbReference>
<dbReference type="Pfam" id="PF02114">
    <property type="entry name" value="Phosducin"/>
    <property type="match status" value="1"/>
</dbReference>
<dbReference type="PRINTS" id="PR00677">
    <property type="entry name" value="PHOSDUCIN"/>
</dbReference>
<dbReference type="SUPFAM" id="SSF52833">
    <property type="entry name" value="Thioredoxin-like"/>
    <property type="match status" value="1"/>
</dbReference>
<organism>
    <name type="scientific">Bos taurus</name>
    <name type="common">Bovine</name>
    <dbReference type="NCBI Taxonomy" id="9913"/>
    <lineage>
        <taxon>Eukaryota</taxon>
        <taxon>Metazoa</taxon>
        <taxon>Chordata</taxon>
        <taxon>Craniata</taxon>
        <taxon>Vertebrata</taxon>
        <taxon>Euteleostomi</taxon>
        <taxon>Mammalia</taxon>
        <taxon>Eutheria</taxon>
        <taxon>Laurasiatheria</taxon>
        <taxon>Artiodactyla</taxon>
        <taxon>Ruminantia</taxon>
        <taxon>Pecora</taxon>
        <taxon>Bovidae</taxon>
        <taxon>Bovinae</taxon>
        <taxon>Bos</taxon>
    </lineage>
</organism>
<protein>
    <recommendedName>
        <fullName>Phosducin</fullName>
        <shortName>PHD</shortName>
    </recommendedName>
    <alternativeName>
        <fullName>33 kDa phototransducing protein</fullName>
    </alternativeName>
    <alternativeName>
        <fullName>Protein MEKA</fullName>
    </alternativeName>
</protein>
<reference key="1">
    <citation type="journal article" date="1990" name="J. Biol. Chem.">
        <title>Amino acid and cDNA sequence of bovine phosducin, a soluble phosphoprotein from photoreceptor cells.</title>
        <authorList>
            <person name="Lee R.H."/>
            <person name="Fowler A."/>
            <person name="McGinnis J.F."/>
            <person name="Lolley R.N."/>
            <person name="Craft C.M."/>
        </authorList>
    </citation>
    <scope>PROTEIN SEQUENCE</scope>
    <scope>NUCLEOTIDE SEQUENCE [MRNA] OF 228-245</scope>
    <source>
        <tissue>Retina</tissue>
    </source>
</reference>
<reference key="2">
    <citation type="journal article" date="1989" name="Brain Res. Mol. Brain Res.">
        <title>Isolation of a novel retina-specific clone (MEKA cDNA) encoding a photoreceptor soluble protein.</title>
        <authorList>
            <person name="Kuo C.-H."/>
            <person name="Akiyama M."/>
            <person name="Miki N."/>
        </authorList>
    </citation>
    <scope>NUCLEOTIDE SEQUENCE [MRNA]</scope>
</reference>
<reference key="3">
    <citation type="journal article" date="1990" name="Gene">
        <title>Analysis of the human, bovine and rat 33-kDa proteins and cDNA in retina and pineal gland.</title>
        <authorList>
            <person name="Abe T."/>
            <person name="Nakabayashi H."/>
            <person name="Tamada H."/>
            <person name="Takagi T."/>
            <person name="Sakuragi S."/>
            <person name="Yamaki K."/>
            <person name="Shinohara T."/>
        </authorList>
    </citation>
    <scope>NUCLEOTIDE SEQUENCE [MRNA] OF 8-245</scope>
    <source>
        <tissue>Pineal gland</tissue>
        <tissue>Retina</tissue>
    </source>
</reference>
<reference key="4">
    <citation type="journal article" date="1990" name="J. Biol. Chem.">
        <title>Protein kinase A phosphorylates retinal phosducin on serine 73 in situ.</title>
        <authorList>
            <person name="Lee R.H."/>
            <person name="Brown B.M."/>
            <person name="Lolley R.N."/>
        </authorList>
    </citation>
    <scope>PHOSPHORYLATION AT SER-73</scope>
</reference>
<reference key="5">
    <citation type="journal article" date="2000" name="Mol. Cell. Biol.">
        <title>Modulation of CRX transactivation activity by phosducin isoforms.</title>
        <authorList>
            <person name="Zhu X."/>
            <person name="Craft C.M."/>
        </authorList>
    </citation>
    <scope>SUBCELLULAR LOCATION</scope>
</reference>
<reference key="6">
    <citation type="journal article" date="1998" name="Structure">
        <title>Phosducin induces a structural change in transducin beta gamma.</title>
        <authorList>
            <person name="Loew A."/>
            <person name="Ho Y.K."/>
            <person name="Blundell T."/>
            <person name="Bax B."/>
        </authorList>
    </citation>
    <scope>X-RAY CRYSTALLOGRAPHY (2.8 ANGSTROMS) OF COMPLEX WITH G-BETA AND G-GAMMA</scope>
</reference>
<proteinExistence type="evidence at protein level"/>
<evidence type="ECO:0000250" key="1"/>
<evidence type="ECO:0000250" key="2">
    <source>
        <dbReference type="UniProtKB" id="P20941"/>
    </source>
</evidence>
<evidence type="ECO:0000255" key="3"/>
<evidence type="ECO:0000256" key="4">
    <source>
        <dbReference type="SAM" id="MobiDB-lite"/>
    </source>
</evidence>
<evidence type="ECO:0000269" key="5">
    <source>
    </source>
</evidence>
<evidence type="ECO:0000269" key="6">
    <source>
    </source>
</evidence>
<evidence type="ECO:0000305" key="7"/>
<evidence type="ECO:0007829" key="8">
    <source>
        <dbReference type="PDB" id="1A0R"/>
    </source>
</evidence>
<gene>
    <name type="primary">PDC</name>
</gene>
<keyword id="KW-0002">3D-structure</keyword>
<keyword id="KW-0966">Cell projection</keyword>
<keyword id="KW-0969">Cilium</keyword>
<keyword id="KW-0963">Cytoplasm</keyword>
<keyword id="KW-0903">Direct protein sequencing</keyword>
<keyword id="KW-0539">Nucleus</keyword>
<keyword id="KW-0597">Phosphoprotein</keyword>
<keyword id="KW-1185">Reference proteome</keyword>
<keyword id="KW-0716">Sensory transduction</keyword>
<keyword id="KW-0844">Vision</keyword>
<feature type="chain" id="PRO_0000163748" description="Phosducin">
    <location>
        <begin position="1"/>
        <end position="245"/>
    </location>
</feature>
<feature type="domain" description="Phosducin" evidence="3">
    <location>
        <begin position="1"/>
        <end position="244"/>
    </location>
</feature>
<feature type="region of interest" description="Disordered" evidence="4">
    <location>
        <begin position="1"/>
        <end position="70"/>
    </location>
</feature>
<feature type="region of interest" description="Thioredoxin fold" evidence="1">
    <location>
        <begin position="111"/>
        <end position="245"/>
    </location>
</feature>
<feature type="compositionally biased region" description="Basic and acidic residues" evidence="4">
    <location>
        <begin position="28"/>
        <end position="50"/>
    </location>
</feature>
<feature type="compositionally biased region" description="Basic and acidic residues" evidence="4">
    <location>
        <begin position="58"/>
        <end position="69"/>
    </location>
</feature>
<feature type="modified residue" description="Phosphoserine; by PKA" evidence="6">
    <location>
        <position position="73"/>
    </location>
</feature>
<feature type="sequence conflict" description="In Ref. 3; AAA30349." evidence="7" ref="3">
    <original>H</original>
    <variation>P</variation>
    <location>
        <position position="44"/>
    </location>
</feature>
<feature type="sequence conflict" description="In Ref. 3; AAA30349." evidence="7" ref="3">
    <original>TN</original>
    <variation>SK</variation>
    <location>
        <begin position="238"/>
        <end position="239"/>
    </location>
</feature>
<feature type="helix" evidence="8">
    <location>
        <begin position="21"/>
        <end position="35"/>
    </location>
</feature>
<feature type="helix" evidence="8">
    <location>
        <begin position="74"/>
        <end position="80"/>
    </location>
</feature>
<feature type="helix" evidence="8">
    <location>
        <begin position="87"/>
        <end position="105"/>
    </location>
</feature>
<feature type="strand" evidence="8">
    <location>
        <begin position="113"/>
        <end position="116"/>
    </location>
</feature>
<feature type="helix" evidence="8">
    <location>
        <begin position="120"/>
        <end position="128"/>
    </location>
</feature>
<feature type="strand" evidence="8">
    <location>
        <begin position="135"/>
        <end position="141"/>
    </location>
</feature>
<feature type="helix" evidence="8">
    <location>
        <begin position="148"/>
        <end position="161"/>
    </location>
</feature>
<feature type="strand" evidence="8">
    <location>
        <begin position="165"/>
        <end position="171"/>
    </location>
</feature>
<feature type="helix" evidence="8">
    <location>
        <begin position="172"/>
        <end position="175"/>
    </location>
</feature>
<feature type="turn" evidence="8">
    <location>
        <begin position="183"/>
        <end position="185"/>
    </location>
</feature>
<feature type="strand" evidence="8">
    <location>
        <begin position="187"/>
        <end position="193"/>
    </location>
</feature>
<feature type="strand" evidence="8">
    <location>
        <begin position="196"/>
        <end position="201"/>
    </location>
</feature>
<feature type="helix" evidence="8">
    <location>
        <begin position="204"/>
        <end position="207"/>
    </location>
</feature>
<feature type="helix" evidence="8">
    <location>
        <begin position="214"/>
        <end position="222"/>
    </location>
</feature>
<feature type="turn" evidence="8">
    <location>
        <begin position="223"/>
        <end position="225"/>
    </location>
</feature>
<comment type="function">
    <text evidence="1">Inhibits the transcriptional activation activity of the cone-rod homeobox CRX (By similarity). May participate in the regulation of visual phototransduction or in the integration of photoreceptor metabolism.</text>
</comment>
<comment type="subunit">
    <text evidence="1">Interacts with CRX (By similarity). Forms a complex with the beta and gamma subunits of the GTP-binding protein, transducin.</text>
</comment>
<comment type="subcellular location">
    <subcellularLocation>
        <location evidence="2">Cytoplasm</location>
        <location evidence="2">Cytosol</location>
    </subcellularLocation>
    <subcellularLocation>
        <location evidence="2">Nucleus</location>
    </subcellularLocation>
    <subcellularLocation>
        <location evidence="5">Cell projection</location>
        <location evidence="5">Cilium</location>
        <location evidence="5">Photoreceptor outer segment</location>
    </subcellularLocation>
    <subcellularLocation>
        <location evidence="5">Photoreceptor inner segment</location>
    </subcellularLocation>
</comment>
<comment type="PTM">
    <text evidence="1">Light-induced changes in cyclic nucleotide levels modulate the phosphorylation of this protein by cAMP kinase.</text>
</comment>
<comment type="similarity">
    <text evidence="7">Belongs to the phosducin family.</text>
</comment>
<comment type="sequence caution" evidence="7">
    <conflict type="frameshift">
        <sequence resource="EMBL-CDS" id="AAA62716"/>
    </conflict>
</comment>
<name>PHOS_BOVIN</name>